<organism>
    <name type="scientific">Listeria monocytogenes serovar 1/2a (strain ATCC BAA-679 / EGD-e)</name>
    <dbReference type="NCBI Taxonomy" id="169963"/>
    <lineage>
        <taxon>Bacteria</taxon>
        <taxon>Bacillati</taxon>
        <taxon>Bacillota</taxon>
        <taxon>Bacilli</taxon>
        <taxon>Bacillales</taxon>
        <taxon>Listeriaceae</taxon>
        <taxon>Listeria</taxon>
    </lineage>
</organism>
<dbReference type="EMBL" id="AL591979">
    <property type="protein sequence ID" value="CAC99464.1"/>
    <property type="molecule type" value="Genomic_DNA"/>
</dbReference>
<dbReference type="PIR" id="AB1248">
    <property type="entry name" value="AB1248"/>
</dbReference>
<dbReference type="RefSeq" id="NP_464911.1">
    <property type="nucleotide sequence ID" value="NC_003210.1"/>
</dbReference>
<dbReference type="RefSeq" id="WP_010990110.1">
    <property type="nucleotide sequence ID" value="NZ_CP149495.1"/>
</dbReference>
<dbReference type="SMR" id="Q8Y7A3"/>
<dbReference type="STRING" id="169963.gene:17594043"/>
<dbReference type="PaxDb" id="169963-lmo1386"/>
<dbReference type="EnsemblBacteria" id="CAC99464">
    <property type="protein sequence ID" value="CAC99464"/>
    <property type="gene ID" value="CAC99464"/>
</dbReference>
<dbReference type="GeneID" id="987830"/>
<dbReference type="KEGG" id="lmo:lmo1386"/>
<dbReference type="PATRIC" id="fig|169963.11.peg.1424"/>
<dbReference type="eggNOG" id="COG1280">
    <property type="taxonomic scope" value="Bacteria"/>
</dbReference>
<dbReference type="eggNOG" id="COG1674">
    <property type="taxonomic scope" value="Bacteria"/>
</dbReference>
<dbReference type="HOGENOM" id="CLU_001981_9_6_9"/>
<dbReference type="OrthoDB" id="9807790at2"/>
<dbReference type="PhylomeDB" id="Q8Y7A3"/>
<dbReference type="BioCyc" id="LMON169963:LMO1386-MONOMER"/>
<dbReference type="Proteomes" id="UP000000817">
    <property type="component" value="Chromosome"/>
</dbReference>
<dbReference type="GO" id="GO:0005886">
    <property type="term" value="C:plasma membrane"/>
    <property type="evidence" value="ECO:0007669"/>
    <property type="project" value="UniProtKB-SubCell"/>
</dbReference>
<dbReference type="GO" id="GO:0005524">
    <property type="term" value="F:ATP binding"/>
    <property type="evidence" value="ECO:0007669"/>
    <property type="project" value="UniProtKB-KW"/>
</dbReference>
<dbReference type="GO" id="GO:0016887">
    <property type="term" value="F:ATP hydrolysis activity"/>
    <property type="evidence" value="ECO:0007669"/>
    <property type="project" value="InterPro"/>
</dbReference>
<dbReference type="GO" id="GO:0003677">
    <property type="term" value="F:DNA binding"/>
    <property type="evidence" value="ECO:0007669"/>
    <property type="project" value="UniProtKB-KW"/>
</dbReference>
<dbReference type="GO" id="GO:0015616">
    <property type="term" value="F:DNA translocase activity"/>
    <property type="evidence" value="ECO:0000318"/>
    <property type="project" value="GO_Central"/>
</dbReference>
<dbReference type="GO" id="GO:0051301">
    <property type="term" value="P:cell division"/>
    <property type="evidence" value="ECO:0007669"/>
    <property type="project" value="UniProtKB-KW"/>
</dbReference>
<dbReference type="GO" id="GO:0007059">
    <property type="term" value="P:chromosome segregation"/>
    <property type="evidence" value="ECO:0007669"/>
    <property type="project" value="UniProtKB-KW"/>
</dbReference>
<dbReference type="CDD" id="cd01127">
    <property type="entry name" value="TrwB_TraG_TraD_VirD4"/>
    <property type="match status" value="1"/>
</dbReference>
<dbReference type="Gene3D" id="3.30.980.40">
    <property type="match status" value="1"/>
</dbReference>
<dbReference type="Gene3D" id="3.40.50.300">
    <property type="entry name" value="P-loop containing nucleotide triphosphate hydrolases"/>
    <property type="match status" value="1"/>
</dbReference>
<dbReference type="Gene3D" id="1.10.10.10">
    <property type="entry name" value="Winged helix-like DNA-binding domain superfamily/Winged helix DNA-binding domain"/>
    <property type="match status" value="1"/>
</dbReference>
<dbReference type="InterPro" id="IPR003593">
    <property type="entry name" value="AAA+_ATPase"/>
</dbReference>
<dbReference type="InterPro" id="IPR050206">
    <property type="entry name" value="FtsK/SpoIIIE/SftA"/>
</dbReference>
<dbReference type="InterPro" id="IPR041027">
    <property type="entry name" value="FtsK_alpha"/>
</dbReference>
<dbReference type="InterPro" id="IPR002543">
    <property type="entry name" value="FtsK_dom"/>
</dbReference>
<dbReference type="InterPro" id="IPR018541">
    <property type="entry name" value="Ftsk_gamma"/>
</dbReference>
<dbReference type="InterPro" id="IPR027417">
    <property type="entry name" value="P-loop_NTPase"/>
</dbReference>
<dbReference type="InterPro" id="IPR036388">
    <property type="entry name" value="WH-like_DNA-bd_sf"/>
</dbReference>
<dbReference type="InterPro" id="IPR036390">
    <property type="entry name" value="WH_DNA-bd_sf"/>
</dbReference>
<dbReference type="PANTHER" id="PTHR22683:SF41">
    <property type="entry name" value="DNA TRANSLOCASE FTSK"/>
    <property type="match status" value="1"/>
</dbReference>
<dbReference type="PANTHER" id="PTHR22683">
    <property type="entry name" value="SPORULATION PROTEIN RELATED"/>
    <property type="match status" value="1"/>
</dbReference>
<dbReference type="Pfam" id="PF17854">
    <property type="entry name" value="FtsK_alpha"/>
    <property type="match status" value="1"/>
</dbReference>
<dbReference type="Pfam" id="PF09397">
    <property type="entry name" value="FtsK_gamma"/>
    <property type="match status" value="1"/>
</dbReference>
<dbReference type="Pfam" id="PF01580">
    <property type="entry name" value="FtsK_SpoIIIE"/>
    <property type="match status" value="1"/>
</dbReference>
<dbReference type="SMART" id="SM00382">
    <property type="entry name" value="AAA"/>
    <property type="match status" value="1"/>
</dbReference>
<dbReference type="SMART" id="SM00843">
    <property type="entry name" value="Ftsk_gamma"/>
    <property type="match status" value="1"/>
</dbReference>
<dbReference type="SUPFAM" id="SSF52540">
    <property type="entry name" value="P-loop containing nucleoside triphosphate hydrolases"/>
    <property type="match status" value="1"/>
</dbReference>
<dbReference type="SUPFAM" id="SSF46785">
    <property type="entry name" value="Winged helix' DNA-binding domain"/>
    <property type="match status" value="1"/>
</dbReference>
<dbReference type="PROSITE" id="PS50901">
    <property type="entry name" value="FTSK"/>
    <property type="match status" value="1"/>
</dbReference>
<protein>
    <recommendedName>
        <fullName>DNA translocase FtsK</fullName>
    </recommendedName>
</protein>
<reference key="1">
    <citation type="journal article" date="2001" name="Science">
        <title>Comparative genomics of Listeria species.</title>
        <authorList>
            <person name="Glaser P."/>
            <person name="Frangeul L."/>
            <person name="Buchrieser C."/>
            <person name="Rusniok C."/>
            <person name="Amend A."/>
            <person name="Baquero F."/>
            <person name="Berche P."/>
            <person name="Bloecker H."/>
            <person name="Brandt P."/>
            <person name="Chakraborty T."/>
            <person name="Charbit A."/>
            <person name="Chetouani F."/>
            <person name="Couve E."/>
            <person name="de Daruvar A."/>
            <person name="Dehoux P."/>
            <person name="Domann E."/>
            <person name="Dominguez-Bernal G."/>
            <person name="Duchaud E."/>
            <person name="Durant L."/>
            <person name="Dussurget O."/>
            <person name="Entian K.-D."/>
            <person name="Fsihi H."/>
            <person name="Garcia-del Portillo F."/>
            <person name="Garrido P."/>
            <person name="Gautier L."/>
            <person name="Goebel W."/>
            <person name="Gomez-Lopez N."/>
            <person name="Hain T."/>
            <person name="Hauf J."/>
            <person name="Jackson D."/>
            <person name="Jones L.-M."/>
            <person name="Kaerst U."/>
            <person name="Kreft J."/>
            <person name="Kuhn M."/>
            <person name="Kunst F."/>
            <person name="Kurapkat G."/>
            <person name="Madueno E."/>
            <person name="Maitournam A."/>
            <person name="Mata Vicente J."/>
            <person name="Ng E."/>
            <person name="Nedjari H."/>
            <person name="Nordsiek G."/>
            <person name="Novella S."/>
            <person name="de Pablos B."/>
            <person name="Perez-Diaz J.-C."/>
            <person name="Purcell R."/>
            <person name="Remmel B."/>
            <person name="Rose M."/>
            <person name="Schlueter T."/>
            <person name="Simoes N."/>
            <person name="Tierrez A."/>
            <person name="Vazquez-Boland J.-A."/>
            <person name="Voss H."/>
            <person name="Wehland J."/>
            <person name="Cossart P."/>
        </authorList>
    </citation>
    <scope>NUCLEOTIDE SEQUENCE [LARGE SCALE GENOMIC DNA]</scope>
    <source>
        <strain>ATCC BAA-679 / EGD-e</strain>
    </source>
</reference>
<comment type="function">
    <text evidence="1">Essential cell division protein that coordinates cell division and chromosome segregation. The N-terminus is involved in assembly of the cell-division machinery. The C-terminus functions as a DNA motor that moves dsDNA in an ATP-dependent manner towards the dif recombination site, which is located within the replication terminus region. Required for activation of the Xer recombinase, allowing activation of chromosome unlinking by recombination (By similarity).</text>
</comment>
<comment type="subunit">
    <text evidence="1">Homohexamer. Forms a ring that surrounds DNA (By similarity).</text>
</comment>
<comment type="subcellular location">
    <subcellularLocation>
        <location evidence="1">Cell membrane</location>
        <topology evidence="1">Multi-pass membrane protein</topology>
    </subcellularLocation>
    <text evidence="1">Located at the septum.</text>
</comment>
<comment type="domain">
    <text evidence="1">Consists of an N-terminal domain, which is sufficient for the localization to the septal ring and is required for cell division, followed by a linker domain, and a C-terminal domain, which forms the translocation motor involved in chromosome segregation. The C-terminal domain can be further subdivided into alpha, beta and gamma subdomains. The alpha and beta subdomains form the DNA pump, and the gamma subdomain is a regulatory subdomain (By similarity).</text>
</comment>
<comment type="similarity">
    <text evidence="5">Belongs to the FtsK/SpoIIIE/SftA family.</text>
</comment>
<sequence>MATQKKKTSGRKKSSTRSKKKQSASFRLEITGVILIAIGVIGLLQLGFVGRGFFALAEMFVGLLSYVLLAGSVILGGYMVIRRKMPHLFSKRLVGIYLIVLGFLTYIHMYFIIHNLGANASVVSSTWKLVLENLFRPNQVGFVGGGMIGAAITSITYFLLDRLGTNLIAVLLIIYGFSLVSGISIRQFFSKIAEFVRYLFTKGKVATEKGKEVKAKRDKKKAEKIVDVEPDEVIDVIEPLQEEKTPPIISNFSSKVEQEKAPVEEKISQKEQDLEMFQQESFENEIYQLPPVDILAPAKVTDQSKEYDQIKVNAKKLEDTFESFGVKAKITQVHLGPAVTKYEVQPSVGVKVSKIVSLSDDIALALAAKDIRIEAPIPGKSAIGIEVANQNVAMVSLREVLENNPKNNPDEKLQIALGRDISGEAMMANLDKMPHLLVAGATGSGKSVCINGIITSILLRAKPHEVKMMMIDPKMVELNVYNGIPHLLAPVVTNPKKAAQALQKVVAEMERRYDLFSHTGTRNMQGYNDYVKKHNELNEEKQPELPFIVVIVDELADLMMVASNDVEDAITRLAQMARAAGIHLIIATQRPSVDVITGVIKANIPSRIAFAVSSSIDSRTILDMGGAEKLLGRGDMLLLPVGSSKPTRIQGAFLSDAEVEDVVNYVISQQKAQYSEEMIPDDIPEVEGEVTDELYHEAVELVVEMQTASVSMLQRKFRIGYNRAARLIDEMEQRGVVGPHEGSKPRRVNVEVSPEHE</sequence>
<feature type="chain" id="PRO_0000098269" description="DNA translocase FtsK">
    <location>
        <begin position="1"/>
        <end position="757"/>
    </location>
</feature>
<feature type="transmembrane region" description="Helical" evidence="2">
    <location>
        <begin position="30"/>
        <end position="50"/>
    </location>
</feature>
<feature type="transmembrane region" description="Helical" evidence="2">
    <location>
        <begin position="61"/>
        <end position="81"/>
    </location>
</feature>
<feature type="transmembrane region" description="Helical" evidence="2">
    <location>
        <begin position="93"/>
        <end position="113"/>
    </location>
</feature>
<feature type="transmembrane region" description="Helical" evidence="2">
    <location>
        <begin position="140"/>
        <end position="160"/>
    </location>
</feature>
<feature type="transmembrane region" description="Helical" evidence="2">
    <location>
        <begin position="163"/>
        <end position="183"/>
    </location>
</feature>
<feature type="topological domain" description="Cytoplasmic" evidence="2">
    <location>
        <begin position="184"/>
        <end position="757"/>
    </location>
</feature>
<feature type="domain" description="FtsK" evidence="3">
    <location>
        <begin position="423"/>
        <end position="619"/>
    </location>
</feature>
<feature type="region of interest" description="Disordered" evidence="4">
    <location>
        <begin position="1"/>
        <end position="20"/>
    </location>
</feature>
<feature type="region of interest" description="Disordered" evidence="4">
    <location>
        <begin position="735"/>
        <end position="757"/>
    </location>
</feature>
<feature type="binding site" evidence="3">
    <location>
        <begin position="443"/>
        <end position="448"/>
    </location>
    <ligand>
        <name>ATP</name>
        <dbReference type="ChEBI" id="CHEBI:30616"/>
    </ligand>
</feature>
<keyword id="KW-0067">ATP-binding</keyword>
<keyword id="KW-0131">Cell cycle</keyword>
<keyword id="KW-0132">Cell division</keyword>
<keyword id="KW-1003">Cell membrane</keyword>
<keyword id="KW-0159">Chromosome partition</keyword>
<keyword id="KW-0238">DNA-binding</keyword>
<keyword id="KW-0472">Membrane</keyword>
<keyword id="KW-0547">Nucleotide-binding</keyword>
<keyword id="KW-1185">Reference proteome</keyword>
<keyword id="KW-0812">Transmembrane</keyword>
<keyword id="KW-1133">Transmembrane helix</keyword>
<accession>Q8Y7A3</accession>
<evidence type="ECO:0000250" key="1"/>
<evidence type="ECO:0000255" key="2"/>
<evidence type="ECO:0000255" key="3">
    <source>
        <dbReference type="PROSITE-ProRule" id="PRU00289"/>
    </source>
</evidence>
<evidence type="ECO:0000256" key="4">
    <source>
        <dbReference type="SAM" id="MobiDB-lite"/>
    </source>
</evidence>
<evidence type="ECO:0000305" key="5"/>
<proteinExistence type="inferred from homology"/>
<gene>
    <name type="primary">ftsK</name>
    <name type="ordered locus">lmo1386</name>
</gene>
<name>FTSK_LISMO</name>